<gene>
    <name evidence="1" type="primary">aspS</name>
    <name type="ordered locus">BT9727_4135</name>
</gene>
<organism>
    <name type="scientific">Bacillus thuringiensis subsp. konkukian (strain 97-27)</name>
    <dbReference type="NCBI Taxonomy" id="281309"/>
    <lineage>
        <taxon>Bacteria</taxon>
        <taxon>Bacillati</taxon>
        <taxon>Bacillota</taxon>
        <taxon>Bacilli</taxon>
        <taxon>Bacillales</taxon>
        <taxon>Bacillaceae</taxon>
        <taxon>Bacillus</taxon>
        <taxon>Bacillus cereus group</taxon>
    </lineage>
</organism>
<accession>Q6HDC3</accession>
<comment type="function">
    <text evidence="1">Aspartyl-tRNA synthetase with relaxed tRNA specificity since it is able to aspartylate not only its cognate tRNA(Asp) but also tRNA(Asn). Reaction proceeds in two steps: L-aspartate is first activated by ATP to form Asp-AMP and then transferred to the acceptor end of tRNA(Asp/Asn).</text>
</comment>
<comment type="catalytic activity">
    <reaction evidence="1">
        <text>tRNA(Asx) + L-aspartate + ATP = L-aspartyl-tRNA(Asx) + AMP + diphosphate</text>
        <dbReference type="Rhea" id="RHEA:18349"/>
        <dbReference type="Rhea" id="RHEA-COMP:9710"/>
        <dbReference type="Rhea" id="RHEA-COMP:9711"/>
        <dbReference type="ChEBI" id="CHEBI:29991"/>
        <dbReference type="ChEBI" id="CHEBI:30616"/>
        <dbReference type="ChEBI" id="CHEBI:33019"/>
        <dbReference type="ChEBI" id="CHEBI:78442"/>
        <dbReference type="ChEBI" id="CHEBI:78516"/>
        <dbReference type="ChEBI" id="CHEBI:456215"/>
        <dbReference type="EC" id="6.1.1.23"/>
    </reaction>
</comment>
<comment type="subunit">
    <text evidence="1">Homodimer.</text>
</comment>
<comment type="subcellular location">
    <subcellularLocation>
        <location evidence="1">Cytoplasm</location>
    </subcellularLocation>
</comment>
<comment type="similarity">
    <text evidence="1">Belongs to the class-II aminoacyl-tRNA synthetase family. Type 1 subfamily.</text>
</comment>
<evidence type="ECO:0000255" key="1">
    <source>
        <dbReference type="HAMAP-Rule" id="MF_00044"/>
    </source>
</evidence>
<protein>
    <recommendedName>
        <fullName evidence="1">Aspartate--tRNA(Asp/Asn) ligase</fullName>
        <ecNumber evidence="1">6.1.1.23</ecNumber>
    </recommendedName>
    <alternativeName>
        <fullName evidence="1">Aspartyl-tRNA synthetase</fullName>
        <shortName evidence="1">AspRS</shortName>
    </alternativeName>
    <alternativeName>
        <fullName evidence="1">Non-discriminating aspartyl-tRNA synthetase</fullName>
        <shortName evidence="1">ND-AspRS</shortName>
    </alternativeName>
</protein>
<feature type="chain" id="PRO_0000110826" description="Aspartate--tRNA(Asp/Asn) ligase">
    <location>
        <begin position="1"/>
        <end position="591"/>
    </location>
</feature>
<feature type="region of interest" description="Aspartate" evidence="1">
    <location>
        <begin position="200"/>
        <end position="203"/>
    </location>
</feature>
<feature type="binding site" evidence="1">
    <location>
        <position position="176"/>
    </location>
    <ligand>
        <name>L-aspartate</name>
        <dbReference type="ChEBI" id="CHEBI:29991"/>
    </ligand>
</feature>
<feature type="binding site" evidence="1">
    <location>
        <begin position="222"/>
        <end position="224"/>
    </location>
    <ligand>
        <name>ATP</name>
        <dbReference type="ChEBI" id="CHEBI:30616"/>
    </ligand>
</feature>
<feature type="binding site" evidence="1">
    <location>
        <position position="222"/>
    </location>
    <ligand>
        <name>L-aspartate</name>
        <dbReference type="ChEBI" id="CHEBI:29991"/>
    </ligand>
</feature>
<feature type="binding site" evidence="1">
    <location>
        <position position="231"/>
    </location>
    <ligand>
        <name>ATP</name>
        <dbReference type="ChEBI" id="CHEBI:30616"/>
    </ligand>
</feature>
<feature type="binding site" evidence="1">
    <location>
        <position position="450"/>
    </location>
    <ligand>
        <name>L-aspartate</name>
        <dbReference type="ChEBI" id="CHEBI:29991"/>
    </ligand>
</feature>
<feature type="binding site" evidence="1">
    <location>
        <position position="484"/>
    </location>
    <ligand>
        <name>ATP</name>
        <dbReference type="ChEBI" id="CHEBI:30616"/>
    </ligand>
</feature>
<feature type="binding site" evidence="1">
    <location>
        <position position="491"/>
    </location>
    <ligand>
        <name>L-aspartate</name>
        <dbReference type="ChEBI" id="CHEBI:29991"/>
    </ligand>
</feature>
<feature type="binding site" evidence="1">
    <location>
        <begin position="536"/>
        <end position="539"/>
    </location>
    <ligand>
        <name>ATP</name>
        <dbReference type="ChEBI" id="CHEBI:30616"/>
    </ligand>
</feature>
<feature type="site" description="Important for tRNA non-discrimination" evidence="1">
    <location>
        <position position="84"/>
    </location>
</feature>
<keyword id="KW-0030">Aminoacyl-tRNA synthetase</keyword>
<keyword id="KW-0067">ATP-binding</keyword>
<keyword id="KW-0963">Cytoplasm</keyword>
<keyword id="KW-0436">Ligase</keyword>
<keyword id="KW-0547">Nucleotide-binding</keyword>
<keyword id="KW-0648">Protein biosynthesis</keyword>
<dbReference type="EC" id="6.1.1.23" evidence="1"/>
<dbReference type="EMBL" id="AE017355">
    <property type="protein sequence ID" value="AAT63905.1"/>
    <property type="molecule type" value="Genomic_DNA"/>
</dbReference>
<dbReference type="RefSeq" id="WP_000840895.1">
    <property type="nucleotide sequence ID" value="NC_005957.1"/>
</dbReference>
<dbReference type="RefSeq" id="YP_038453.1">
    <property type="nucleotide sequence ID" value="NC_005957.1"/>
</dbReference>
<dbReference type="SMR" id="Q6HDC3"/>
<dbReference type="KEGG" id="btk:BT9727_4135"/>
<dbReference type="PATRIC" id="fig|281309.8.peg.4413"/>
<dbReference type="HOGENOM" id="CLU_014330_3_2_9"/>
<dbReference type="Proteomes" id="UP000001301">
    <property type="component" value="Chromosome"/>
</dbReference>
<dbReference type="GO" id="GO:0005737">
    <property type="term" value="C:cytoplasm"/>
    <property type="evidence" value="ECO:0007669"/>
    <property type="project" value="UniProtKB-SubCell"/>
</dbReference>
<dbReference type="GO" id="GO:0004815">
    <property type="term" value="F:aspartate-tRNA ligase activity"/>
    <property type="evidence" value="ECO:0007669"/>
    <property type="project" value="UniProtKB-UniRule"/>
</dbReference>
<dbReference type="GO" id="GO:0050560">
    <property type="term" value="F:aspartate-tRNA(Asn) ligase activity"/>
    <property type="evidence" value="ECO:0007669"/>
    <property type="project" value="UniProtKB-EC"/>
</dbReference>
<dbReference type="GO" id="GO:0005524">
    <property type="term" value="F:ATP binding"/>
    <property type="evidence" value="ECO:0007669"/>
    <property type="project" value="UniProtKB-UniRule"/>
</dbReference>
<dbReference type="GO" id="GO:0140096">
    <property type="term" value="F:catalytic activity, acting on a protein"/>
    <property type="evidence" value="ECO:0007669"/>
    <property type="project" value="UniProtKB-ARBA"/>
</dbReference>
<dbReference type="GO" id="GO:0003676">
    <property type="term" value="F:nucleic acid binding"/>
    <property type="evidence" value="ECO:0007669"/>
    <property type="project" value="InterPro"/>
</dbReference>
<dbReference type="GO" id="GO:0016740">
    <property type="term" value="F:transferase activity"/>
    <property type="evidence" value="ECO:0007669"/>
    <property type="project" value="UniProtKB-ARBA"/>
</dbReference>
<dbReference type="GO" id="GO:0006422">
    <property type="term" value="P:aspartyl-tRNA aminoacylation"/>
    <property type="evidence" value="ECO:0007669"/>
    <property type="project" value="UniProtKB-UniRule"/>
</dbReference>
<dbReference type="CDD" id="cd00777">
    <property type="entry name" value="AspRS_core"/>
    <property type="match status" value="1"/>
</dbReference>
<dbReference type="CDD" id="cd04317">
    <property type="entry name" value="EcAspRS_like_N"/>
    <property type="match status" value="1"/>
</dbReference>
<dbReference type="Gene3D" id="3.30.930.10">
    <property type="entry name" value="Bira Bifunctional Protein, Domain 2"/>
    <property type="match status" value="1"/>
</dbReference>
<dbReference type="Gene3D" id="3.30.1360.30">
    <property type="entry name" value="GAD-like domain"/>
    <property type="match status" value="1"/>
</dbReference>
<dbReference type="Gene3D" id="2.40.50.140">
    <property type="entry name" value="Nucleic acid-binding proteins"/>
    <property type="match status" value="1"/>
</dbReference>
<dbReference type="HAMAP" id="MF_00044">
    <property type="entry name" value="Asp_tRNA_synth_type1"/>
    <property type="match status" value="1"/>
</dbReference>
<dbReference type="InterPro" id="IPR004364">
    <property type="entry name" value="Aa-tRNA-synt_II"/>
</dbReference>
<dbReference type="InterPro" id="IPR006195">
    <property type="entry name" value="aa-tRNA-synth_II"/>
</dbReference>
<dbReference type="InterPro" id="IPR045864">
    <property type="entry name" value="aa-tRNA-synth_II/BPL/LPL"/>
</dbReference>
<dbReference type="InterPro" id="IPR004524">
    <property type="entry name" value="Asp-tRNA-ligase_1"/>
</dbReference>
<dbReference type="InterPro" id="IPR047089">
    <property type="entry name" value="Asp-tRNA-ligase_1_N"/>
</dbReference>
<dbReference type="InterPro" id="IPR002312">
    <property type="entry name" value="Asp/Asn-tRNA-synth_IIb"/>
</dbReference>
<dbReference type="InterPro" id="IPR047090">
    <property type="entry name" value="AspRS_core"/>
</dbReference>
<dbReference type="InterPro" id="IPR004115">
    <property type="entry name" value="GAD-like_sf"/>
</dbReference>
<dbReference type="InterPro" id="IPR029351">
    <property type="entry name" value="GAD_dom"/>
</dbReference>
<dbReference type="InterPro" id="IPR012340">
    <property type="entry name" value="NA-bd_OB-fold"/>
</dbReference>
<dbReference type="InterPro" id="IPR004365">
    <property type="entry name" value="NA-bd_OB_tRNA"/>
</dbReference>
<dbReference type="NCBIfam" id="TIGR00459">
    <property type="entry name" value="aspS_bact"/>
    <property type="match status" value="1"/>
</dbReference>
<dbReference type="NCBIfam" id="NF001750">
    <property type="entry name" value="PRK00476.1"/>
    <property type="match status" value="1"/>
</dbReference>
<dbReference type="PANTHER" id="PTHR22594:SF5">
    <property type="entry name" value="ASPARTATE--TRNA LIGASE, MITOCHONDRIAL"/>
    <property type="match status" value="1"/>
</dbReference>
<dbReference type="PANTHER" id="PTHR22594">
    <property type="entry name" value="ASPARTYL/LYSYL-TRNA SYNTHETASE"/>
    <property type="match status" value="1"/>
</dbReference>
<dbReference type="Pfam" id="PF02938">
    <property type="entry name" value="GAD"/>
    <property type="match status" value="1"/>
</dbReference>
<dbReference type="Pfam" id="PF00152">
    <property type="entry name" value="tRNA-synt_2"/>
    <property type="match status" value="1"/>
</dbReference>
<dbReference type="Pfam" id="PF01336">
    <property type="entry name" value="tRNA_anti-codon"/>
    <property type="match status" value="1"/>
</dbReference>
<dbReference type="PRINTS" id="PR01042">
    <property type="entry name" value="TRNASYNTHASP"/>
</dbReference>
<dbReference type="SUPFAM" id="SSF55681">
    <property type="entry name" value="Class II aaRS and biotin synthetases"/>
    <property type="match status" value="1"/>
</dbReference>
<dbReference type="SUPFAM" id="SSF55261">
    <property type="entry name" value="GAD domain-like"/>
    <property type="match status" value="1"/>
</dbReference>
<dbReference type="SUPFAM" id="SSF50249">
    <property type="entry name" value="Nucleic acid-binding proteins"/>
    <property type="match status" value="1"/>
</dbReference>
<dbReference type="PROSITE" id="PS50862">
    <property type="entry name" value="AA_TRNA_LIGASE_II"/>
    <property type="match status" value="1"/>
</dbReference>
<sequence>MAERTHACGKVTVEAVGQTVQLKGWVQKRRDLGGLIFIDLRDRTGIVQVVFNPETSKEALEVAETIRSEYVLHVEGTVVERGEGAINDNMATGRIEVQATKVNVLNAAKTTPIIIADDTDASEDVRLKYRYLDLRRPVMFNTFKMRHDVTKTIRNFLDTEEFLEVETPILTKSTPEGARDYLVPSRVHDGEFYALPQSPQLFKQLLMVGGFERYYQVARCFRDEDLRADRQPEFTQIDIEASFLTQDEILDMMERMMTKVMKDAKGVEVSAPFPRMKYADAMARYGSDKPDTRFEMELTDLSEFAAGCGFKVFTSAVESGGQVKAINAKGAASKYSRKDIDALTEFVKVYGAKGLAWLKVEEDGLKGPIAKFFGEEDANVLMNTLEATAGDLLLFVADKKSVVADSLGALRLRLGKELELIDESKFNFLWVTDWPLLEYDEDADRYFAAHHPFTMPFREDVELLETAPEKARAQAYDLVLNGYELGGGSLRIYERDVQEKMFKALGFSQEEAQEQFGFLLEAFEYGTPPHGGIALGLDRLVMLLAGRTNLRDTIAFPKTASASCLLTEAPSPVAEAQLEELNLKLNVKEEK</sequence>
<proteinExistence type="inferred from homology"/>
<reference key="1">
    <citation type="journal article" date="2006" name="J. Bacteriol.">
        <title>Pathogenomic sequence analysis of Bacillus cereus and Bacillus thuringiensis isolates closely related to Bacillus anthracis.</title>
        <authorList>
            <person name="Han C.S."/>
            <person name="Xie G."/>
            <person name="Challacombe J.F."/>
            <person name="Altherr M.R."/>
            <person name="Bhotika S.S."/>
            <person name="Bruce D."/>
            <person name="Campbell C.S."/>
            <person name="Campbell M.L."/>
            <person name="Chen J."/>
            <person name="Chertkov O."/>
            <person name="Cleland C."/>
            <person name="Dimitrijevic M."/>
            <person name="Doggett N.A."/>
            <person name="Fawcett J.J."/>
            <person name="Glavina T."/>
            <person name="Goodwin L.A."/>
            <person name="Hill K.K."/>
            <person name="Hitchcock P."/>
            <person name="Jackson P.J."/>
            <person name="Keim P."/>
            <person name="Kewalramani A.R."/>
            <person name="Longmire J."/>
            <person name="Lucas S."/>
            <person name="Malfatti S."/>
            <person name="McMurry K."/>
            <person name="Meincke L.J."/>
            <person name="Misra M."/>
            <person name="Moseman B.L."/>
            <person name="Mundt M."/>
            <person name="Munk A.C."/>
            <person name="Okinaka R.T."/>
            <person name="Parson-Quintana B."/>
            <person name="Reilly L.P."/>
            <person name="Richardson P."/>
            <person name="Robinson D.L."/>
            <person name="Rubin E."/>
            <person name="Saunders E."/>
            <person name="Tapia R."/>
            <person name="Tesmer J.G."/>
            <person name="Thayer N."/>
            <person name="Thompson L.S."/>
            <person name="Tice H."/>
            <person name="Ticknor L.O."/>
            <person name="Wills P.L."/>
            <person name="Brettin T.S."/>
            <person name="Gilna P."/>
        </authorList>
    </citation>
    <scope>NUCLEOTIDE SEQUENCE [LARGE SCALE GENOMIC DNA]</scope>
    <source>
        <strain>97-27</strain>
    </source>
</reference>
<name>SYDND_BACHK</name>